<gene>
    <name evidence="1" type="primary">rpmB</name>
    <name type="ordered locus">CMS3072</name>
</gene>
<organism>
    <name type="scientific">Clavibacter sepedonicus</name>
    <name type="common">Clavibacter michiganensis subsp. sepedonicus</name>
    <dbReference type="NCBI Taxonomy" id="31964"/>
    <lineage>
        <taxon>Bacteria</taxon>
        <taxon>Bacillati</taxon>
        <taxon>Actinomycetota</taxon>
        <taxon>Actinomycetes</taxon>
        <taxon>Micrococcales</taxon>
        <taxon>Microbacteriaceae</taxon>
        <taxon>Clavibacter</taxon>
    </lineage>
</organism>
<proteinExistence type="inferred from homology"/>
<reference key="1">
    <citation type="journal article" date="2008" name="J. Bacteriol.">
        <title>Genome of the actinomycete plant pathogen Clavibacter michiganensis subsp. sepedonicus suggests recent niche adaptation.</title>
        <authorList>
            <person name="Bentley S.D."/>
            <person name="Corton C."/>
            <person name="Brown S.E."/>
            <person name="Barron A."/>
            <person name="Clark L."/>
            <person name="Doggett J."/>
            <person name="Harris B."/>
            <person name="Ormond D."/>
            <person name="Quail M.A."/>
            <person name="May G."/>
            <person name="Francis D."/>
            <person name="Knudson D."/>
            <person name="Parkhill J."/>
            <person name="Ishimaru C.A."/>
        </authorList>
    </citation>
    <scope>NUCLEOTIDE SEQUENCE [LARGE SCALE GENOMIC DNA]</scope>
    <source>
        <strain>ATCC 33113 / DSM 20744 / JCM 9667 / LMG 2889 / ICMP 2535 / C-1</strain>
    </source>
</reference>
<keyword id="KW-0687">Ribonucleoprotein</keyword>
<keyword id="KW-0689">Ribosomal protein</keyword>
<sequence length="78" mass="8657">MAATCQVTGAVPGFGHNISHSHRRTKRRFDPNVQKKTYYVPSLRRNVKLTLSAKGIKVIDARGIESVVKDILARGVKI</sequence>
<accession>B0RDL1</accession>
<protein>
    <recommendedName>
        <fullName evidence="1">Large ribosomal subunit protein bL28</fullName>
    </recommendedName>
    <alternativeName>
        <fullName evidence="2">50S ribosomal protein L28</fullName>
    </alternativeName>
</protein>
<name>RL28_CLASE</name>
<feature type="chain" id="PRO_1000079842" description="Large ribosomal subunit protein bL28">
    <location>
        <begin position="1"/>
        <end position="78"/>
    </location>
</feature>
<comment type="similarity">
    <text evidence="1">Belongs to the bacterial ribosomal protein bL28 family.</text>
</comment>
<dbReference type="EMBL" id="AM849034">
    <property type="protein sequence ID" value="CAQ03140.1"/>
    <property type="molecule type" value="Genomic_DNA"/>
</dbReference>
<dbReference type="RefSeq" id="WP_012039624.1">
    <property type="nucleotide sequence ID" value="NZ_MZMN01000003.1"/>
</dbReference>
<dbReference type="SMR" id="B0RDL1"/>
<dbReference type="STRING" id="31964.CMS3072"/>
<dbReference type="GeneID" id="92948955"/>
<dbReference type="KEGG" id="cms:CMS3072"/>
<dbReference type="eggNOG" id="COG0227">
    <property type="taxonomic scope" value="Bacteria"/>
</dbReference>
<dbReference type="HOGENOM" id="CLU_064548_3_1_11"/>
<dbReference type="OrthoDB" id="9805609at2"/>
<dbReference type="Proteomes" id="UP000001318">
    <property type="component" value="Chromosome"/>
</dbReference>
<dbReference type="GO" id="GO:1990904">
    <property type="term" value="C:ribonucleoprotein complex"/>
    <property type="evidence" value="ECO:0007669"/>
    <property type="project" value="UniProtKB-KW"/>
</dbReference>
<dbReference type="GO" id="GO:0005840">
    <property type="term" value="C:ribosome"/>
    <property type="evidence" value="ECO:0007669"/>
    <property type="project" value="UniProtKB-KW"/>
</dbReference>
<dbReference type="GO" id="GO:0003735">
    <property type="term" value="F:structural constituent of ribosome"/>
    <property type="evidence" value="ECO:0007669"/>
    <property type="project" value="InterPro"/>
</dbReference>
<dbReference type="GO" id="GO:0006412">
    <property type="term" value="P:translation"/>
    <property type="evidence" value="ECO:0007669"/>
    <property type="project" value="UniProtKB-UniRule"/>
</dbReference>
<dbReference type="FunFam" id="2.30.170.40:FF:000001">
    <property type="entry name" value="50S ribosomal protein L28"/>
    <property type="match status" value="1"/>
</dbReference>
<dbReference type="Gene3D" id="2.30.170.40">
    <property type="entry name" value="Ribosomal protein L28/L24"/>
    <property type="match status" value="1"/>
</dbReference>
<dbReference type="HAMAP" id="MF_00373">
    <property type="entry name" value="Ribosomal_bL28"/>
    <property type="match status" value="1"/>
</dbReference>
<dbReference type="InterPro" id="IPR026569">
    <property type="entry name" value="Ribosomal_bL28"/>
</dbReference>
<dbReference type="InterPro" id="IPR034704">
    <property type="entry name" value="Ribosomal_bL28/bL31-like_sf"/>
</dbReference>
<dbReference type="InterPro" id="IPR001383">
    <property type="entry name" value="Ribosomal_bL28_bact-type"/>
</dbReference>
<dbReference type="InterPro" id="IPR037147">
    <property type="entry name" value="Ribosomal_bL28_sf"/>
</dbReference>
<dbReference type="NCBIfam" id="TIGR00009">
    <property type="entry name" value="L28"/>
    <property type="match status" value="1"/>
</dbReference>
<dbReference type="PANTHER" id="PTHR13528">
    <property type="entry name" value="39S RIBOSOMAL PROTEIN L28, MITOCHONDRIAL"/>
    <property type="match status" value="1"/>
</dbReference>
<dbReference type="PANTHER" id="PTHR13528:SF2">
    <property type="entry name" value="LARGE RIBOSOMAL SUBUNIT PROTEIN BL28M"/>
    <property type="match status" value="1"/>
</dbReference>
<dbReference type="Pfam" id="PF00830">
    <property type="entry name" value="Ribosomal_L28"/>
    <property type="match status" value="1"/>
</dbReference>
<dbReference type="SUPFAM" id="SSF143800">
    <property type="entry name" value="L28p-like"/>
    <property type="match status" value="1"/>
</dbReference>
<evidence type="ECO:0000255" key="1">
    <source>
        <dbReference type="HAMAP-Rule" id="MF_00373"/>
    </source>
</evidence>
<evidence type="ECO:0000305" key="2"/>